<name>CMOA1_YERPS</name>
<accession>Q66B88</accession>
<evidence type="ECO:0000255" key="1">
    <source>
        <dbReference type="HAMAP-Rule" id="MF_01589"/>
    </source>
</evidence>
<protein>
    <recommendedName>
        <fullName evidence="1">Carboxy-S-adenosyl-L-methionine synthase 1</fullName>
        <shortName evidence="1">Cx-SAM synthase 1</shortName>
        <ecNumber evidence="1">2.1.3.-</ecNumber>
    </recommendedName>
</protein>
<sequence>MNIDKIFENPSNLRSFEFNNDVCKVFDDMVSRSVPGYHNIQDIISLTYDEFSQNRVFIDVGCSTGTTIAKILSENQVNYCYGIDISESMLAIAQEKCGEHESLVTFKNCNLLNGTDNVINSEKVPDFIILNLVLQFIRPPERKKFITNIKSLCSSSTLMLVFEKIIFNDAEINMKYIDSYLKWKGKNGYSESEVSNKRKALENKLIPYLHEENIELFKSSGFNSVEICFSFLNFRGYLCRC</sequence>
<organism>
    <name type="scientific">Yersinia pseudotuberculosis serotype I (strain IP32953)</name>
    <dbReference type="NCBI Taxonomy" id="273123"/>
    <lineage>
        <taxon>Bacteria</taxon>
        <taxon>Pseudomonadati</taxon>
        <taxon>Pseudomonadota</taxon>
        <taxon>Gammaproteobacteria</taxon>
        <taxon>Enterobacterales</taxon>
        <taxon>Yersiniaceae</taxon>
        <taxon>Yersinia</taxon>
    </lineage>
</organism>
<dbReference type="EC" id="2.1.3.-" evidence="1"/>
<dbReference type="EMBL" id="BX936398">
    <property type="protein sequence ID" value="CAH21124.1"/>
    <property type="molecule type" value="Genomic_DNA"/>
</dbReference>
<dbReference type="RefSeq" id="WP_011192339.1">
    <property type="nucleotide sequence ID" value="NC_006155.1"/>
</dbReference>
<dbReference type="SMR" id="Q66B88"/>
<dbReference type="GeneID" id="96662931"/>
<dbReference type="KEGG" id="ypo:BZ17_585"/>
<dbReference type="KEGG" id="yps:YPTB1886"/>
<dbReference type="PATRIC" id="fig|273123.14.peg.631"/>
<dbReference type="Proteomes" id="UP000001011">
    <property type="component" value="Chromosome"/>
</dbReference>
<dbReference type="GO" id="GO:0016743">
    <property type="term" value="F:carboxyl- or carbamoyltransferase activity"/>
    <property type="evidence" value="ECO:0007669"/>
    <property type="project" value="UniProtKB-UniRule"/>
</dbReference>
<dbReference type="GO" id="GO:1904047">
    <property type="term" value="F:S-adenosyl-L-methionine binding"/>
    <property type="evidence" value="ECO:0007669"/>
    <property type="project" value="UniProtKB-UniRule"/>
</dbReference>
<dbReference type="GO" id="GO:0002098">
    <property type="term" value="P:tRNA wobble uridine modification"/>
    <property type="evidence" value="ECO:0007669"/>
    <property type="project" value="InterPro"/>
</dbReference>
<dbReference type="CDD" id="cd02440">
    <property type="entry name" value="AdoMet_MTases"/>
    <property type="match status" value="1"/>
</dbReference>
<dbReference type="Gene3D" id="3.40.50.150">
    <property type="entry name" value="Vaccinia Virus protein VP39"/>
    <property type="match status" value="1"/>
</dbReference>
<dbReference type="HAMAP" id="MF_01589">
    <property type="entry name" value="Cx_SAM_synthase"/>
    <property type="match status" value="1"/>
</dbReference>
<dbReference type="InterPro" id="IPR005271">
    <property type="entry name" value="CmoA"/>
</dbReference>
<dbReference type="InterPro" id="IPR041698">
    <property type="entry name" value="Methyltransf_25"/>
</dbReference>
<dbReference type="InterPro" id="IPR029063">
    <property type="entry name" value="SAM-dependent_MTases_sf"/>
</dbReference>
<dbReference type="PANTHER" id="PTHR43861:SF2">
    <property type="entry name" value="CARBOXY-S-ADENOSYL-L-METHIONINE SYNTHASE"/>
    <property type="match status" value="1"/>
</dbReference>
<dbReference type="PANTHER" id="PTHR43861">
    <property type="entry name" value="TRANS-ACONITATE 2-METHYLTRANSFERASE-RELATED"/>
    <property type="match status" value="1"/>
</dbReference>
<dbReference type="Pfam" id="PF13649">
    <property type="entry name" value="Methyltransf_25"/>
    <property type="match status" value="1"/>
</dbReference>
<dbReference type="PIRSF" id="PIRSF006325">
    <property type="entry name" value="MeTrfase_bac"/>
    <property type="match status" value="1"/>
</dbReference>
<dbReference type="SUPFAM" id="SSF53335">
    <property type="entry name" value="S-adenosyl-L-methionine-dependent methyltransferases"/>
    <property type="match status" value="1"/>
</dbReference>
<comment type="function">
    <text evidence="1">Catalyzes the conversion of S-adenosyl-L-methionine (SAM) to carboxy-S-adenosyl-L-methionine (Cx-SAM).</text>
</comment>
<comment type="catalytic activity">
    <reaction evidence="1">
        <text>prephenate + S-adenosyl-L-methionine = carboxy-S-adenosyl-L-methionine + 3-phenylpyruvate + H2O</text>
        <dbReference type="Rhea" id="RHEA:51692"/>
        <dbReference type="ChEBI" id="CHEBI:15377"/>
        <dbReference type="ChEBI" id="CHEBI:18005"/>
        <dbReference type="ChEBI" id="CHEBI:29934"/>
        <dbReference type="ChEBI" id="CHEBI:59789"/>
        <dbReference type="ChEBI" id="CHEBI:134278"/>
    </reaction>
</comment>
<comment type="subunit">
    <text evidence="1">Homodimer.</text>
</comment>
<comment type="similarity">
    <text evidence="1">Belongs to the class I-like SAM-binding methyltransferase superfamily. Cx-SAM synthase family.</text>
</comment>
<feature type="chain" id="PRO_0000314410" description="Carboxy-S-adenosyl-L-methionine synthase 1">
    <location>
        <begin position="1"/>
        <end position="241"/>
    </location>
</feature>
<feature type="binding site" evidence="1">
    <location>
        <position position="37"/>
    </location>
    <ligand>
        <name>S-adenosyl-L-methionine</name>
        <dbReference type="ChEBI" id="CHEBI:59789"/>
    </ligand>
</feature>
<feature type="binding site" evidence="1">
    <location>
        <begin position="61"/>
        <end position="63"/>
    </location>
    <ligand>
        <name>S-adenosyl-L-methionine</name>
        <dbReference type="ChEBI" id="CHEBI:59789"/>
    </ligand>
</feature>
<feature type="binding site" evidence="1">
    <location>
        <position position="131"/>
    </location>
    <ligand>
        <name>S-adenosyl-L-methionine</name>
        <dbReference type="ChEBI" id="CHEBI:59789"/>
    </ligand>
</feature>
<feature type="binding site" evidence="1">
    <location>
        <position position="198"/>
    </location>
    <ligand>
        <name>S-adenosyl-L-methionine</name>
        <dbReference type="ChEBI" id="CHEBI:59789"/>
    </ligand>
</feature>
<keyword id="KW-0949">S-adenosyl-L-methionine</keyword>
<keyword id="KW-0808">Transferase</keyword>
<gene>
    <name evidence="1" type="primary">cmoA1</name>
    <name type="ordered locus">YPTB1886</name>
</gene>
<reference key="1">
    <citation type="journal article" date="2004" name="Proc. Natl. Acad. Sci. U.S.A.">
        <title>Insights into the evolution of Yersinia pestis through whole-genome comparison with Yersinia pseudotuberculosis.</title>
        <authorList>
            <person name="Chain P.S.G."/>
            <person name="Carniel E."/>
            <person name="Larimer F.W."/>
            <person name="Lamerdin J."/>
            <person name="Stoutland P.O."/>
            <person name="Regala W.M."/>
            <person name="Georgescu A.M."/>
            <person name="Vergez L.M."/>
            <person name="Land M.L."/>
            <person name="Motin V.L."/>
            <person name="Brubaker R.R."/>
            <person name="Fowler J."/>
            <person name="Hinnebusch J."/>
            <person name="Marceau M."/>
            <person name="Medigue C."/>
            <person name="Simonet M."/>
            <person name="Chenal-Francisque V."/>
            <person name="Souza B."/>
            <person name="Dacheux D."/>
            <person name="Elliott J.M."/>
            <person name="Derbise A."/>
            <person name="Hauser L.J."/>
            <person name="Garcia E."/>
        </authorList>
    </citation>
    <scope>NUCLEOTIDE SEQUENCE [LARGE SCALE GENOMIC DNA]</scope>
    <source>
        <strain>IP32953</strain>
    </source>
</reference>
<proteinExistence type="inferred from homology"/>